<evidence type="ECO:0000255" key="1">
    <source>
        <dbReference type="HAMAP-Rule" id="MF_01233"/>
    </source>
</evidence>
<evidence type="ECO:0000305" key="2"/>
<protein>
    <recommendedName>
        <fullName evidence="1">HTH-type transcriptional regulator HdfR</fullName>
    </recommendedName>
    <alternativeName>
        <fullName evidence="1">H-NS-dependent flhDC regulator</fullName>
    </alternativeName>
</protein>
<feature type="chain" id="PRO_0000105638" description="HTH-type transcriptional regulator HdfR">
    <location>
        <begin position="1"/>
        <end position="293"/>
    </location>
</feature>
<feature type="domain" description="HTH lysR-type" evidence="1">
    <location>
        <begin position="1"/>
        <end position="58"/>
    </location>
</feature>
<feature type="DNA-binding region" description="H-T-H motif" evidence="1">
    <location>
        <begin position="18"/>
        <end position="37"/>
    </location>
</feature>
<name>HDFR_YERPE</name>
<gene>
    <name evidence="1" type="primary">hdfR</name>
    <name type="synonym">lysR20</name>
    <name type="ordered locus">YPO3904</name>
    <name type="ordered locus">y0332</name>
    <name type="ordered locus">YP_3144</name>
</gene>
<reference key="1">
    <citation type="journal article" date="2001" name="Nature">
        <title>Genome sequence of Yersinia pestis, the causative agent of plague.</title>
        <authorList>
            <person name="Parkhill J."/>
            <person name="Wren B.W."/>
            <person name="Thomson N.R."/>
            <person name="Titball R.W."/>
            <person name="Holden M.T.G."/>
            <person name="Prentice M.B."/>
            <person name="Sebaihia M."/>
            <person name="James K.D."/>
            <person name="Churcher C.M."/>
            <person name="Mungall K.L."/>
            <person name="Baker S."/>
            <person name="Basham D."/>
            <person name="Bentley S.D."/>
            <person name="Brooks K."/>
            <person name="Cerdeno-Tarraga A.-M."/>
            <person name="Chillingworth T."/>
            <person name="Cronin A."/>
            <person name="Davies R.M."/>
            <person name="Davis P."/>
            <person name="Dougan G."/>
            <person name="Feltwell T."/>
            <person name="Hamlin N."/>
            <person name="Holroyd S."/>
            <person name="Jagels K."/>
            <person name="Karlyshev A.V."/>
            <person name="Leather S."/>
            <person name="Moule S."/>
            <person name="Oyston P.C.F."/>
            <person name="Quail M.A."/>
            <person name="Rutherford K.M."/>
            <person name="Simmonds M."/>
            <person name="Skelton J."/>
            <person name="Stevens K."/>
            <person name="Whitehead S."/>
            <person name="Barrell B.G."/>
        </authorList>
    </citation>
    <scope>NUCLEOTIDE SEQUENCE [LARGE SCALE GENOMIC DNA]</scope>
    <source>
        <strain>CO-92 / Biovar Orientalis</strain>
    </source>
</reference>
<reference key="2">
    <citation type="journal article" date="2002" name="J. Bacteriol.">
        <title>Genome sequence of Yersinia pestis KIM.</title>
        <authorList>
            <person name="Deng W."/>
            <person name="Burland V."/>
            <person name="Plunkett G. III"/>
            <person name="Boutin A."/>
            <person name="Mayhew G.F."/>
            <person name="Liss P."/>
            <person name="Perna N.T."/>
            <person name="Rose D.J."/>
            <person name="Mau B."/>
            <person name="Zhou S."/>
            <person name="Schwartz D.C."/>
            <person name="Fetherston J.D."/>
            <person name="Lindler L.E."/>
            <person name="Brubaker R.R."/>
            <person name="Plano G.V."/>
            <person name="Straley S.C."/>
            <person name="McDonough K.A."/>
            <person name="Nilles M.L."/>
            <person name="Matson J.S."/>
            <person name="Blattner F.R."/>
            <person name="Perry R.D."/>
        </authorList>
    </citation>
    <scope>NUCLEOTIDE SEQUENCE [LARGE SCALE GENOMIC DNA]</scope>
    <source>
        <strain>KIM10+ / Biovar Mediaevalis</strain>
    </source>
</reference>
<reference key="3">
    <citation type="journal article" date="2004" name="DNA Res.">
        <title>Complete genome sequence of Yersinia pestis strain 91001, an isolate avirulent to humans.</title>
        <authorList>
            <person name="Song Y."/>
            <person name="Tong Z."/>
            <person name="Wang J."/>
            <person name="Wang L."/>
            <person name="Guo Z."/>
            <person name="Han Y."/>
            <person name="Zhang J."/>
            <person name="Pei D."/>
            <person name="Zhou D."/>
            <person name="Qin H."/>
            <person name="Pang X."/>
            <person name="Han Y."/>
            <person name="Zhai J."/>
            <person name="Li M."/>
            <person name="Cui B."/>
            <person name="Qi Z."/>
            <person name="Jin L."/>
            <person name="Dai R."/>
            <person name="Chen F."/>
            <person name="Li S."/>
            <person name="Ye C."/>
            <person name="Du Z."/>
            <person name="Lin W."/>
            <person name="Wang J."/>
            <person name="Yu J."/>
            <person name="Yang H."/>
            <person name="Wang J."/>
            <person name="Huang P."/>
            <person name="Yang R."/>
        </authorList>
    </citation>
    <scope>NUCLEOTIDE SEQUENCE [LARGE SCALE GENOMIC DNA]</scope>
    <source>
        <strain>91001 / Biovar Mediaevalis</strain>
    </source>
</reference>
<organism>
    <name type="scientific">Yersinia pestis</name>
    <dbReference type="NCBI Taxonomy" id="632"/>
    <lineage>
        <taxon>Bacteria</taxon>
        <taxon>Pseudomonadati</taxon>
        <taxon>Pseudomonadota</taxon>
        <taxon>Gammaproteobacteria</taxon>
        <taxon>Enterobacterales</taxon>
        <taxon>Yersiniaceae</taxon>
        <taxon>Yersinia</taxon>
    </lineage>
</organism>
<comment type="function">
    <text evidence="1">Negatively regulates the transcription of the flagellar master operon flhDC by binding to the upstream region of the operon.</text>
</comment>
<comment type="similarity">
    <text evidence="2">Belongs to the LysR transcriptional regulatory family.</text>
</comment>
<dbReference type="EMBL" id="AL590842">
    <property type="protein sequence ID" value="CAL22489.1"/>
    <property type="molecule type" value="Genomic_DNA"/>
</dbReference>
<dbReference type="EMBL" id="AE009952">
    <property type="protein sequence ID" value="AAM83923.1"/>
    <property type="molecule type" value="Genomic_DNA"/>
</dbReference>
<dbReference type="EMBL" id="AE017042">
    <property type="protein sequence ID" value="AAS63314.1"/>
    <property type="molecule type" value="Genomic_DNA"/>
</dbReference>
<dbReference type="PIR" id="AF0475">
    <property type="entry name" value="AF0475"/>
</dbReference>
<dbReference type="RefSeq" id="WP_002212020.1">
    <property type="nucleotide sequence ID" value="NZ_WUCM01000095.1"/>
</dbReference>
<dbReference type="RefSeq" id="YP_002348779.1">
    <property type="nucleotide sequence ID" value="NC_003143.1"/>
</dbReference>
<dbReference type="SMR" id="Q8ZAA7"/>
<dbReference type="STRING" id="214092.YPO3904"/>
<dbReference type="PaxDb" id="214092-YPO3904"/>
<dbReference type="DNASU" id="1145279"/>
<dbReference type="EnsemblBacteria" id="AAS63314">
    <property type="protein sequence ID" value="AAS63314"/>
    <property type="gene ID" value="YP_3144"/>
</dbReference>
<dbReference type="GeneID" id="57974802"/>
<dbReference type="KEGG" id="ype:YPO3904"/>
<dbReference type="KEGG" id="ypk:y0332"/>
<dbReference type="KEGG" id="ypm:YP_3144"/>
<dbReference type="PATRIC" id="fig|214092.21.peg.4431"/>
<dbReference type="eggNOG" id="COG0583">
    <property type="taxonomic scope" value="Bacteria"/>
</dbReference>
<dbReference type="HOGENOM" id="CLU_039613_8_2_6"/>
<dbReference type="OMA" id="ESLMNTW"/>
<dbReference type="OrthoDB" id="9786526at2"/>
<dbReference type="Proteomes" id="UP000000815">
    <property type="component" value="Chromosome"/>
</dbReference>
<dbReference type="Proteomes" id="UP000001019">
    <property type="component" value="Chromosome"/>
</dbReference>
<dbReference type="Proteomes" id="UP000002490">
    <property type="component" value="Chromosome"/>
</dbReference>
<dbReference type="GO" id="GO:0003677">
    <property type="term" value="F:DNA binding"/>
    <property type="evidence" value="ECO:0007669"/>
    <property type="project" value="UniProtKB-KW"/>
</dbReference>
<dbReference type="GO" id="GO:0003700">
    <property type="term" value="F:DNA-binding transcription factor activity"/>
    <property type="evidence" value="ECO:0000318"/>
    <property type="project" value="GO_Central"/>
</dbReference>
<dbReference type="GO" id="GO:0045892">
    <property type="term" value="P:negative regulation of DNA-templated transcription"/>
    <property type="evidence" value="ECO:0007669"/>
    <property type="project" value="UniProtKB-UniRule"/>
</dbReference>
<dbReference type="GO" id="GO:0006355">
    <property type="term" value="P:regulation of DNA-templated transcription"/>
    <property type="evidence" value="ECO:0000318"/>
    <property type="project" value="GO_Central"/>
</dbReference>
<dbReference type="CDD" id="cd05466">
    <property type="entry name" value="PBP2_LTTR_substrate"/>
    <property type="match status" value="1"/>
</dbReference>
<dbReference type="FunFam" id="1.10.10.10:FF:000001">
    <property type="entry name" value="LysR family transcriptional regulator"/>
    <property type="match status" value="1"/>
</dbReference>
<dbReference type="Gene3D" id="3.40.190.10">
    <property type="entry name" value="Periplasmic binding protein-like II"/>
    <property type="match status" value="2"/>
</dbReference>
<dbReference type="Gene3D" id="1.10.10.10">
    <property type="entry name" value="Winged helix-like DNA-binding domain superfamily/Winged helix DNA-binding domain"/>
    <property type="match status" value="1"/>
</dbReference>
<dbReference type="HAMAP" id="MF_01233">
    <property type="entry name" value="HTH_type_HdfR"/>
    <property type="match status" value="1"/>
</dbReference>
<dbReference type="InterPro" id="IPR050176">
    <property type="entry name" value="LTTR"/>
</dbReference>
<dbReference type="InterPro" id="IPR005119">
    <property type="entry name" value="LysR_subst-bd"/>
</dbReference>
<dbReference type="InterPro" id="IPR020890">
    <property type="entry name" value="Tscrpt_reg_HTH_HdfR"/>
</dbReference>
<dbReference type="InterPro" id="IPR000847">
    <property type="entry name" value="Tscrpt_reg_HTH_LysR"/>
</dbReference>
<dbReference type="InterPro" id="IPR036388">
    <property type="entry name" value="WH-like_DNA-bd_sf"/>
</dbReference>
<dbReference type="InterPro" id="IPR036390">
    <property type="entry name" value="WH_DNA-bd_sf"/>
</dbReference>
<dbReference type="NCBIfam" id="NF002946">
    <property type="entry name" value="PRK03601.1"/>
    <property type="match status" value="1"/>
</dbReference>
<dbReference type="PANTHER" id="PTHR30579:SF8">
    <property type="entry name" value="HTH-TYPE TRANSCRIPTIONAL REGULATOR HDFR"/>
    <property type="match status" value="1"/>
</dbReference>
<dbReference type="PANTHER" id="PTHR30579">
    <property type="entry name" value="TRANSCRIPTIONAL REGULATOR"/>
    <property type="match status" value="1"/>
</dbReference>
<dbReference type="Pfam" id="PF00126">
    <property type="entry name" value="HTH_1"/>
    <property type="match status" value="1"/>
</dbReference>
<dbReference type="Pfam" id="PF03466">
    <property type="entry name" value="LysR_substrate"/>
    <property type="match status" value="1"/>
</dbReference>
<dbReference type="PRINTS" id="PR00039">
    <property type="entry name" value="HTHLYSR"/>
</dbReference>
<dbReference type="SUPFAM" id="SSF53850">
    <property type="entry name" value="Periplasmic binding protein-like II"/>
    <property type="match status" value="1"/>
</dbReference>
<dbReference type="SUPFAM" id="SSF46785">
    <property type="entry name" value="Winged helix' DNA-binding domain"/>
    <property type="match status" value="1"/>
</dbReference>
<dbReference type="PROSITE" id="PS50931">
    <property type="entry name" value="HTH_LYSR"/>
    <property type="match status" value="1"/>
</dbReference>
<keyword id="KW-0238">DNA-binding</keyword>
<keyword id="KW-1185">Reference proteome</keyword>
<keyword id="KW-0678">Repressor</keyword>
<keyword id="KW-0804">Transcription</keyword>
<keyword id="KW-0805">Transcription regulation</keyword>
<sequence length="293" mass="33933">MDTELLKTFLEVSRTRHFGRAAESLYLTQSAVSFRIRQLENQLGANLFTRHRNNIRLTPAGERLVPYAEMLLNTWRLAKKEVIHSLQHTELSIGATASLWEAYLTPWLQQLYEQQEELRLEARIALRNSLVKQLHERQLDLLITTEPPKMDELACLLLGHFSLRLYSSFSLDLPKEDDTPNEHKNASEVPYIKLEWGADFHQQENRLLDSEQAPILTTTSAHLTRQLLETTGGCAFLPEHWQKEYPQLVIHPDIPPIVRPLYAVWLQNSDQQALIRQLLKTPMNNATQSVTRE</sequence>
<accession>Q8ZAA7</accession>
<accession>Q0WAA9</accession>
<proteinExistence type="inferred from homology"/>